<feature type="chain" id="PRO_1000025869" description="Protein-arginine kinase">
    <location>
        <begin position="1"/>
        <end position="363"/>
    </location>
</feature>
<feature type="domain" description="Phosphagen kinase C-terminal" evidence="1">
    <location>
        <begin position="24"/>
        <end position="254"/>
    </location>
</feature>
<feature type="short sequence motif" description="RDXXRA motif of the pArg binding pocket involved in allosteric regulation" evidence="1">
    <location>
        <begin position="337"/>
        <end position="342"/>
    </location>
</feature>
<feature type="binding site" evidence="1">
    <location>
        <begin position="27"/>
        <end position="31"/>
    </location>
    <ligand>
        <name>ATP</name>
        <dbReference type="ChEBI" id="CHEBI:30616"/>
    </ligand>
</feature>
<feature type="binding site" evidence="1">
    <location>
        <position position="92"/>
    </location>
    <ligand>
        <name>ATP</name>
        <dbReference type="ChEBI" id="CHEBI:30616"/>
    </ligand>
</feature>
<feature type="binding site" evidence="1">
    <location>
        <position position="125"/>
    </location>
    <ligand>
        <name>ATP</name>
        <dbReference type="ChEBI" id="CHEBI:30616"/>
    </ligand>
</feature>
<feature type="binding site" evidence="1">
    <location>
        <begin position="176"/>
        <end position="180"/>
    </location>
    <ligand>
        <name>ATP</name>
        <dbReference type="ChEBI" id="CHEBI:30616"/>
    </ligand>
</feature>
<feature type="binding site" evidence="1">
    <location>
        <begin position="207"/>
        <end position="212"/>
    </location>
    <ligand>
        <name>ATP</name>
        <dbReference type="ChEBI" id="CHEBI:30616"/>
    </ligand>
</feature>
<sequence length="363" mass="41002">MSLQHFIQNALSNWMRQEGPESDIVLSSRIRLARNLDKVRFPTLFSNEEASAIIALFEEQFTGYEVPGIGKFELVKMDQVQPLEKRVLVEKHLISPHLTEASFGACLLSENEEVSIMLNEEDHIRIQCLFPGFQLSEALKAANQVDDWIEDRIDYAFSEQRGYLTSCPTNVGTGLRASVMMHLPALVLTRQINRIIPAINQLGLVVRGIYGEGSEALGNIFQISNQITLGKSEHDIVEDLNSVVAQLIEQERSARKALYQTSQIELEDRVYRSYGVLSNCRMIESKETARCLSDVRLGIDLGIIKGLSSNILNELMILTQPGFLQQYSGGALRPNERDIRRAALIRERLKLENNGNRQEDETI</sequence>
<comment type="function">
    <text evidence="1">Catalyzes the specific phosphorylation of arginine residues in a large number of proteins. Is part of the bacterial stress response system. Protein arginine phosphorylation has a physiologically important role and is involved in the regulation of many critical cellular processes, such as protein homeostasis, motility, competence, and stringent and stress responses, by regulating gene expression and protein activity.</text>
</comment>
<comment type="catalytic activity">
    <reaction evidence="1">
        <text>L-arginyl-[protein] + ATP = N(omega)-phospho-L-arginyl-[protein] + ADP + H(+)</text>
        <dbReference type="Rhea" id="RHEA:43384"/>
        <dbReference type="Rhea" id="RHEA-COMP:10532"/>
        <dbReference type="Rhea" id="RHEA-COMP:10533"/>
        <dbReference type="ChEBI" id="CHEBI:15378"/>
        <dbReference type="ChEBI" id="CHEBI:29965"/>
        <dbReference type="ChEBI" id="CHEBI:30616"/>
        <dbReference type="ChEBI" id="CHEBI:83226"/>
        <dbReference type="ChEBI" id="CHEBI:456216"/>
        <dbReference type="EC" id="2.7.14.1"/>
    </reaction>
</comment>
<comment type="activity regulation">
    <text evidence="1">Appears to be allosterically activated by the binding of pArg-containing polypeptides to the pArg-binding pocket localized in the C-terminal domain of McsB.</text>
</comment>
<comment type="similarity">
    <text evidence="1">Belongs to the ATP:guanido phosphotransferase family.</text>
</comment>
<proteinExistence type="inferred from homology"/>
<gene>
    <name evidence="1" type="primary">mcsB</name>
    <name type="ordered locus">BLi00103</name>
    <name type="ordered locus">BL03260</name>
</gene>
<evidence type="ECO:0000255" key="1">
    <source>
        <dbReference type="HAMAP-Rule" id="MF_00602"/>
    </source>
</evidence>
<name>MCSB_BACLD</name>
<organism>
    <name type="scientific">Bacillus licheniformis (strain ATCC 14580 / DSM 13 / JCM 2505 / CCUG 7422 / NBRC 12200 / NCIMB 9375 / NCTC 10341 / NRRL NRS-1264 / Gibson 46)</name>
    <dbReference type="NCBI Taxonomy" id="279010"/>
    <lineage>
        <taxon>Bacteria</taxon>
        <taxon>Bacillati</taxon>
        <taxon>Bacillota</taxon>
        <taxon>Bacilli</taxon>
        <taxon>Bacillales</taxon>
        <taxon>Bacillaceae</taxon>
        <taxon>Bacillus</taxon>
    </lineage>
</organism>
<protein>
    <recommendedName>
        <fullName evidence="1">Protein-arginine kinase</fullName>
        <ecNumber evidence="1">2.7.14.1</ecNumber>
    </recommendedName>
</protein>
<keyword id="KW-0021">Allosteric enzyme</keyword>
<keyword id="KW-0067">ATP-binding</keyword>
<keyword id="KW-0418">Kinase</keyword>
<keyword id="KW-0547">Nucleotide-binding</keyword>
<keyword id="KW-1185">Reference proteome</keyword>
<keyword id="KW-0808">Transferase</keyword>
<dbReference type="EC" id="2.7.14.1" evidence="1"/>
<dbReference type="EMBL" id="CP000002">
    <property type="protein sequence ID" value="AAU21733.1"/>
    <property type="molecule type" value="Genomic_DNA"/>
</dbReference>
<dbReference type="EMBL" id="AE017333">
    <property type="protein sequence ID" value="AAU39077.1"/>
    <property type="molecule type" value="Genomic_DNA"/>
</dbReference>
<dbReference type="RefSeq" id="WP_003178273.1">
    <property type="nucleotide sequence ID" value="NC_006322.1"/>
</dbReference>
<dbReference type="SMR" id="Q65PD7"/>
<dbReference type="STRING" id="279010.BL03260"/>
<dbReference type="KEGG" id="bld:BLi00103"/>
<dbReference type="KEGG" id="bli:BL03260"/>
<dbReference type="eggNOG" id="COG3869">
    <property type="taxonomic scope" value="Bacteria"/>
</dbReference>
<dbReference type="HOGENOM" id="CLU_066591_1_0_9"/>
<dbReference type="Proteomes" id="UP000000606">
    <property type="component" value="Chromosome"/>
</dbReference>
<dbReference type="GO" id="GO:0005615">
    <property type="term" value="C:extracellular space"/>
    <property type="evidence" value="ECO:0007669"/>
    <property type="project" value="TreeGrafter"/>
</dbReference>
<dbReference type="GO" id="GO:0005524">
    <property type="term" value="F:ATP binding"/>
    <property type="evidence" value="ECO:0007669"/>
    <property type="project" value="UniProtKB-KW"/>
</dbReference>
<dbReference type="GO" id="GO:0004111">
    <property type="term" value="F:creatine kinase activity"/>
    <property type="evidence" value="ECO:0007669"/>
    <property type="project" value="InterPro"/>
</dbReference>
<dbReference type="GO" id="GO:0004672">
    <property type="term" value="F:protein kinase activity"/>
    <property type="evidence" value="ECO:0007669"/>
    <property type="project" value="UniProtKB-UniRule"/>
</dbReference>
<dbReference type="GO" id="GO:0046314">
    <property type="term" value="P:phosphocreatine biosynthetic process"/>
    <property type="evidence" value="ECO:0007669"/>
    <property type="project" value="InterPro"/>
</dbReference>
<dbReference type="CDD" id="cd07930">
    <property type="entry name" value="bacterial_phosphagen_kinase"/>
    <property type="match status" value="1"/>
</dbReference>
<dbReference type="FunFam" id="3.30.590.10:FF:000007">
    <property type="entry name" value="Protein-arginine kinase"/>
    <property type="match status" value="1"/>
</dbReference>
<dbReference type="Gene3D" id="3.30.590.10">
    <property type="entry name" value="Glutamine synthetase/guanido kinase, catalytic domain"/>
    <property type="match status" value="1"/>
</dbReference>
<dbReference type="HAMAP" id="MF_00602">
    <property type="entry name" value="Prot_Arg_kinase"/>
    <property type="match status" value="1"/>
</dbReference>
<dbReference type="InterPro" id="IPR023660">
    <property type="entry name" value="Arg_Kinase"/>
</dbReference>
<dbReference type="InterPro" id="IPR000749">
    <property type="entry name" value="ATP-guanido_PTrfase"/>
</dbReference>
<dbReference type="InterPro" id="IPR022415">
    <property type="entry name" value="ATP-guanido_PTrfase_AS"/>
</dbReference>
<dbReference type="InterPro" id="IPR022414">
    <property type="entry name" value="ATP-guanido_PTrfase_cat"/>
</dbReference>
<dbReference type="InterPro" id="IPR014746">
    <property type="entry name" value="Gln_synth/guanido_kin_cat_dom"/>
</dbReference>
<dbReference type="NCBIfam" id="NF002194">
    <property type="entry name" value="PRK01059.1-4"/>
    <property type="match status" value="1"/>
</dbReference>
<dbReference type="NCBIfam" id="NF002195">
    <property type="entry name" value="PRK01059.1-5"/>
    <property type="match status" value="1"/>
</dbReference>
<dbReference type="PANTHER" id="PTHR11547:SF38">
    <property type="entry name" value="ARGININE KINASE 1-RELATED"/>
    <property type="match status" value="1"/>
</dbReference>
<dbReference type="PANTHER" id="PTHR11547">
    <property type="entry name" value="ARGININE OR CREATINE KINASE"/>
    <property type="match status" value="1"/>
</dbReference>
<dbReference type="Pfam" id="PF00217">
    <property type="entry name" value="ATP-gua_Ptrans"/>
    <property type="match status" value="1"/>
</dbReference>
<dbReference type="SUPFAM" id="SSF55931">
    <property type="entry name" value="Glutamine synthetase/guanido kinase"/>
    <property type="match status" value="1"/>
</dbReference>
<dbReference type="PROSITE" id="PS00112">
    <property type="entry name" value="PHOSPHAGEN_KINASE"/>
    <property type="match status" value="1"/>
</dbReference>
<dbReference type="PROSITE" id="PS51510">
    <property type="entry name" value="PHOSPHAGEN_KINASE_C"/>
    <property type="match status" value="1"/>
</dbReference>
<reference key="1">
    <citation type="journal article" date="2004" name="J. Mol. Microbiol. Biotechnol.">
        <title>The complete genome sequence of Bacillus licheniformis DSM13, an organism with great industrial potential.</title>
        <authorList>
            <person name="Veith B."/>
            <person name="Herzberg C."/>
            <person name="Steckel S."/>
            <person name="Feesche J."/>
            <person name="Maurer K.H."/>
            <person name="Ehrenreich P."/>
            <person name="Baeumer S."/>
            <person name="Henne A."/>
            <person name="Liesegang H."/>
            <person name="Merkl R."/>
            <person name="Ehrenreich A."/>
            <person name="Gottschalk G."/>
        </authorList>
    </citation>
    <scope>NUCLEOTIDE SEQUENCE [LARGE SCALE GENOMIC DNA]</scope>
    <source>
        <strain>ATCC 14580 / DSM 13 / JCM 2505 / CCUG 7422 / NBRC 12200 / NCIMB 9375 / NCTC 10341 / NRRL NRS-1264 / Gibson 46</strain>
    </source>
</reference>
<reference key="2">
    <citation type="journal article" date="2004" name="Genome Biol.">
        <title>Complete genome sequence of the industrial bacterium Bacillus licheniformis and comparisons with closely related Bacillus species.</title>
        <authorList>
            <person name="Rey M.W."/>
            <person name="Ramaiya P."/>
            <person name="Nelson B.A."/>
            <person name="Brody-Karpin S.D."/>
            <person name="Zaretsky E.J."/>
            <person name="Tang M."/>
            <person name="Lopez de Leon A."/>
            <person name="Xiang H."/>
            <person name="Gusti V."/>
            <person name="Clausen I.G."/>
            <person name="Olsen P.B."/>
            <person name="Rasmussen M.D."/>
            <person name="Andersen J.T."/>
            <person name="Joergensen P.L."/>
            <person name="Larsen T.S."/>
            <person name="Sorokin A."/>
            <person name="Bolotin A."/>
            <person name="Lapidus A."/>
            <person name="Galleron N."/>
            <person name="Ehrlich S.D."/>
            <person name="Berka R.M."/>
        </authorList>
    </citation>
    <scope>NUCLEOTIDE SEQUENCE [LARGE SCALE GENOMIC DNA]</scope>
    <source>
        <strain>ATCC 14580 / DSM 13 / JCM 2505 / CCUG 7422 / NBRC 12200 / NCIMB 9375 / NCTC 10341 / NRRL NRS-1264 / Gibson 46</strain>
    </source>
</reference>
<accession>Q65PD7</accession>
<accession>Q62ZS5</accession>